<protein>
    <recommendedName>
        <fullName evidence="1">Sulfite reductase [NADPH] hemoprotein beta-component</fullName>
        <shortName evidence="1">SiR-HP</shortName>
        <shortName evidence="1">SiRHP</shortName>
        <ecNumber evidence="1">1.8.1.2</ecNumber>
    </recommendedName>
</protein>
<gene>
    <name evidence="1" type="primary">cysI</name>
    <name type="ordered locus">Pjdr2_1787</name>
</gene>
<evidence type="ECO:0000255" key="1">
    <source>
        <dbReference type="HAMAP-Rule" id="MF_01540"/>
    </source>
</evidence>
<comment type="function">
    <text evidence="1">Component of the sulfite reductase complex that catalyzes the 6-electron reduction of sulfite to sulfide. This is one of several activities required for the biosynthesis of L-cysteine from sulfate.</text>
</comment>
<comment type="catalytic activity">
    <reaction evidence="1">
        <text>hydrogen sulfide + 3 NADP(+) + 3 H2O = sulfite + 3 NADPH + 4 H(+)</text>
        <dbReference type="Rhea" id="RHEA:13801"/>
        <dbReference type="ChEBI" id="CHEBI:15377"/>
        <dbReference type="ChEBI" id="CHEBI:15378"/>
        <dbReference type="ChEBI" id="CHEBI:17359"/>
        <dbReference type="ChEBI" id="CHEBI:29919"/>
        <dbReference type="ChEBI" id="CHEBI:57783"/>
        <dbReference type="ChEBI" id="CHEBI:58349"/>
        <dbReference type="EC" id="1.8.1.2"/>
    </reaction>
</comment>
<comment type="cofactor">
    <cofactor evidence="1">
        <name>siroheme</name>
        <dbReference type="ChEBI" id="CHEBI:60052"/>
    </cofactor>
    <text evidence="1">Binds 1 siroheme per subunit.</text>
</comment>
<comment type="cofactor">
    <cofactor evidence="1">
        <name>[4Fe-4S] cluster</name>
        <dbReference type="ChEBI" id="CHEBI:49883"/>
    </cofactor>
    <text evidence="1">Binds 1 [4Fe-4S] cluster per subunit.</text>
</comment>
<comment type="pathway">
    <text evidence="1">Sulfur metabolism; hydrogen sulfide biosynthesis; hydrogen sulfide from sulfite (NADPH route): step 1/1.</text>
</comment>
<comment type="subunit">
    <text evidence="1">Alpha(8)-beta(8). The alpha component is a flavoprotein, the beta component is a hemoprotein.</text>
</comment>
<comment type="similarity">
    <text evidence="1">Belongs to the nitrite and sulfite reductase 4Fe-4S domain family.</text>
</comment>
<proteinExistence type="inferred from homology"/>
<organism>
    <name type="scientific">Paenibacillus sp. (strain JDR-2)</name>
    <dbReference type="NCBI Taxonomy" id="324057"/>
    <lineage>
        <taxon>Bacteria</taxon>
        <taxon>Bacillati</taxon>
        <taxon>Bacillota</taxon>
        <taxon>Bacilli</taxon>
        <taxon>Bacillales</taxon>
        <taxon>Paenibacillaceae</taxon>
        <taxon>Paenibacillus</taxon>
    </lineage>
</organism>
<sequence length="574" mass="64063">MAKNHKVEPVGGPPSDVEHLKLESNYLRGSLTDSLANRITGGLPDLDNRLLKFHGSYMQDDRDYRNEREKQKLEPYYQFMLRVVTPGGVATPEQWLLMDSLADKYGTGSLKLTTRQAFQLHGVLKWNLKKTIQEINAAMLSTLAACGDVSRNVMCNPNPYQSELHSEVFHWSQQLTSHLAPKTPAYHEIWLDGEKVVDGAEQGEVEPIYGPVYLPRKFKIGIAVPPSNDVDVYSQDLGYIAILGEDGKLAGFNVCVGGGMGMTHGDTATYPQLAKVIGFVTPDQVLDLAEKVVTIQRDYGNRSVRKYARFKYTIDRHGLPWFMDELQDRLGWELAPAREFHFEHTGDRYGWIKGKDGKWNLNLYVQAGRVVDTEDNKLRSALREIAKIHTGDFRLTANQNLVIANVTAQKKTKIVALLKEFGIAEGSNYSALRRSALSCVALPTCGLAMAEAERYLPSLIDRLEPILANAGLQDQEINIRMTGCPNGCARPALGEISFIGKSPGKYNMYMGAGFTGDRLSKMYKENIGEDEIIDTLTPIIDRYASERNKGENFGDFVIRAGYVKAVTDGTNFHD</sequence>
<keyword id="KW-0004">4Fe-4S</keyword>
<keyword id="KW-0028">Amino-acid biosynthesis</keyword>
<keyword id="KW-0198">Cysteine biosynthesis</keyword>
<keyword id="KW-0349">Heme</keyword>
<keyword id="KW-0408">Iron</keyword>
<keyword id="KW-0411">Iron-sulfur</keyword>
<keyword id="KW-0479">Metal-binding</keyword>
<keyword id="KW-0521">NADP</keyword>
<keyword id="KW-0560">Oxidoreductase</keyword>
<name>CYSI_PAESJ</name>
<feature type="chain" id="PRO_0000388509" description="Sulfite reductase [NADPH] hemoprotein beta-component">
    <location>
        <begin position="1"/>
        <end position="574"/>
    </location>
</feature>
<feature type="binding site" evidence="1">
    <location>
        <position position="439"/>
    </location>
    <ligand>
        <name>[4Fe-4S] cluster</name>
        <dbReference type="ChEBI" id="CHEBI:49883"/>
    </ligand>
</feature>
<feature type="binding site" evidence="1">
    <location>
        <position position="445"/>
    </location>
    <ligand>
        <name>[4Fe-4S] cluster</name>
        <dbReference type="ChEBI" id="CHEBI:49883"/>
    </ligand>
</feature>
<feature type="binding site" evidence="1">
    <location>
        <position position="484"/>
    </location>
    <ligand>
        <name>[4Fe-4S] cluster</name>
        <dbReference type="ChEBI" id="CHEBI:49883"/>
    </ligand>
</feature>
<feature type="binding site" evidence="1">
    <location>
        <position position="488"/>
    </location>
    <ligand>
        <name>[4Fe-4S] cluster</name>
        <dbReference type="ChEBI" id="CHEBI:49883"/>
    </ligand>
</feature>
<feature type="binding site" description="axial binding residue" evidence="1">
    <location>
        <position position="488"/>
    </location>
    <ligand>
        <name>siroheme</name>
        <dbReference type="ChEBI" id="CHEBI:60052"/>
    </ligand>
    <ligandPart>
        <name>Fe</name>
        <dbReference type="ChEBI" id="CHEBI:18248"/>
    </ligandPart>
</feature>
<dbReference type="EC" id="1.8.1.2" evidence="1"/>
<dbReference type="EMBL" id="CP001656">
    <property type="protein sequence ID" value="ACT00449.1"/>
    <property type="molecule type" value="Genomic_DNA"/>
</dbReference>
<dbReference type="RefSeq" id="WP_015843394.1">
    <property type="nucleotide sequence ID" value="NC_012914.1"/>
</dbReference>
<dbReference type="SMR" id="C6CXN6"/>
<dbReference type="STRING" id="324057.Pjdr2_1787"/>
<dbReference type="KEGG" id="pjd:Pjdr2_1787"/>
<dbReference type="eggNOG" id="COG0155">
    <property type="taxonomic scope" value="Bacteria"/>
</dbReference>
<dbReference type="HOGENOM" id="CLU_001975_3_2_9"/>
<dbReference type="OrthoDB" id="9803707at2"/>
<dbReference type="UniPathway" id="UPA00140">
    <property type="reaction ID" value="UER00207"/>
</dbReference>
<dbReference type="GO" id="GO:0009337">
    <property type="term" value="C:sulfite reductase complex (NADPH)"/>
    <property type="evidence" value="ECO:0007669"/>
    <property type="project" value="InterPro"/>
</dbReference>
<dbReference type="GO" id="GO:0051539">
    <property type="term" value="F:4 iron, 4 sulfur cluster binding"/>
    <property type="evidence" value="ECO:0007669"/>
    <property type="project" value="UniProtKB-KW"/>
</dbReference>
<dbReference type="GO" id="GO:0020037">
    <property type="term" value="F:heme binding"/>
    <property type="evidence" value="ECO:0007669"/>
    <property type="project" value="InterPro"/>
</dbReference>
<dbReference type="GO" id="GO:0046872">
    <property type="term" value="F:metal ion binding"/>
    <property type="evidence" value="ECO:0007669"/>
    <property type="project" value="UniProtKB-KW"/>
</dbReference>
<dbReference type="GO" id="GO:0050661">
    <property type="term" value="F:NADP binding"/>
    <property type="evidence" value="ECO:0007669"/>
    <property type="project" value="InterPro"/>
</dbReference>
<dbReference type="GO" id="GO:0050311">
    <property type="term" value="F:sulfite reductase (ferredoxin) activity"/>
    <property type="evidence" value="ECO:0007669"/>
    <property type="project" value="TreeGrafter"/>
</dbReference>
<dbReference type="GO" id="GO:0004783">
    <property type="term" value="F:sulfite reductase (NADPH) activity"/>
    <property type="evidence" value="ECO:0007669"/>
    <property type="project" value="UniProtKB-UniRule"/>
</dbReference>
<dbReference type="GO" id="GO:0019344">
    <property type="term" value="P:cysteine biosynthetic process"/>
    <property type="evidence" value="ECO:0007669"/>
    <property type="project" value="UniProtKB-KW"/>
</dbReference>
<dbReference type="GO" id="GO:0070814">
    <property type="term" value="P:hydrogen sulfide biosynthetic process"/>
    <property type="evidence" value="ECO:0007669"/>
    <property type="project" value="UniProtKB-UniRule"/>
</dbReference>
<dbReference type="GO" id="GO:0000103">
    <property type="term" value="P:sulfate assimilation"/>
    <property type="evidence" value="ECO:0007669"/>
    <property type="project" value="UniProtKB-UniRule"/>
</dbReference>
<dbReference type="FunFam" id="3.30.413.10:FF:000003">
    <property type="entry name" value="Sulfite reductase [NADPH] hemoprotein beta-component"/>
    <property type="match status" value="1"/>
</dbReference>
<dbReference type="FunFam" id="3.30.413.10:FF:000004">
    <property type="entry name" value="Sulfite reductase [NADPH] hemoprotein beta-component"/>
    <property type="match status" value="1"/>
</dbReference>
<dbReference type="Gene3D" id="3.30.413.10">
    <property type="entry name" value="Sulfite Reductase Hemoprotein, domain 1"/>
    <property type="match status" value="2"/>
</dbReference>
<dbReference type="HAMAP" id="MF_01540">
    <property type="entry name" value="CysI"/>
    <property type="match status" value="1"/>
</dbReference>
<dbReference type="InterPro" id="IPR011786">
    <property type="entry name" value="CysI"/>
</dbReference>
<dbReference type="InterPro" id="IPR005117">
    <property type="entry name" value="NiRdtase/SiRdtase_haem-b_fer"/>
</dbReference>
<dbReference type="InterPro" id="IPR036136">
    <property type="entry name" value="Nit/Sulf_reduc_fer-like_dom_sf"/>
</dbReference>
<dbReference type="InterPro" id="IPR006067">
    <property type="entry name" value="NO2/SO3_Rdtase_4Fe4S_dom"/>
</dbReference>
<dbReference type="InterPro" id="IPR045169">
    <property type="entry name" value="NO2/SO3_Rdtase_4Fe4S_prot"/>
</dbReference>
<dbReference type="InterPro" id="IPR045854">
    <property type="entry name" value="NO2/SO3_Rdtase_4Fe4S_sf"/>
</dbReference>
<dbReference type="InterPro" id="IPR006066">
    <property type="entry name" value="NO2/SO3_Rdtase_FeS/sirohaem_BS"/>
</dbReference>
<dbReference type="NCBIfam" id="TIGR02041">
    <property type="entry name" value="CysI"/>
    <property type="match status" value="1"/>
</dbReference>
<dbReference type="NCBIfam" id="NF010029">
    <property type="entry name" value="PRK13504.1"/>
    <property type="match status" value="1"/>
</dbReference>
<dbReference type="PANTHER" id="PTHR11493:SF47">
    <property type="entry name" value="SULFITE REDUCTASE [NADPH] SUBUNIT BETA"/>
    <property type="match status" value="1"/>
</dbReference>
<dbReference type="PANTHER" id="PTHR11493">
    <property type="entry name" value="SULFITE REDUCTASE [NADPH] SUBUNIT BETA-RELATED"/>
    <property type="match status" value="1"/>
</dbReference>
<dbReference type="Pfam" id="PF01077">
    <property type="entry name" value="NIR_SIR"/>
    <property type="match status" value="1"/>
</dbReference>
<dbReference type="Pfam" id="PF03460">
    <property type="entry name" value="NIR_SIR_ferr"/>
    <property type="match status" value="2"/>
</dbReference>
<dbReference type="PRINTS" id="PR00397">
    <property type="entry name" value="SIROHAEM"/>
</dbReference>
<dbReference type="SUPFAM" id="SSF56014">
    <property type="entry name" value="Nitrite and sulphite reductase 4Fe-4S domain-like"/>
    <property type="match status" value="2"/>
</dbReference>
<dbReference type="SUPFAM" id="SSF55124">
    <property type="entry name" value="Nitrite/Sulfite reductase N-terminal domain-like"/>
    <property type="match status" value="2"/>
</dbReference>
<accession>C6CXN6</accession>
<reference key="1">
    <citation type="journal article" date="2012" name="Stand. Genomic Sci.">
        <title>Complete genome sequence of Paenibacillus sp. strain JDR-2.</title>
        <authorList>
            <person name="Chow V."/>
            <person name="Nong G."/>
            <person name="St John F.J."/>
            <person name="Rice J.D."/>
            <person name="Dickstein E."/>
            <person name="Chertkov O."/>
            <person name="Bruce D."/>
            <person name="Detter C."/>
            <person name="Brettin T."/>
            <person name="Han J."/>
            <person name="Woyke T."/>
            <person name="Pitluck S."/>
            <person name="Nolan M."/>
            <person name="Pati A."/>
            <person name="Martin J."/>
            <person name="Copeland A."/>
            <person name="Land M.L."/>
            <person name="Goodwin L."/>
            <person name="Jones J.B."/>
            <person name="Ingram L.O."/>
            <person name="Shanmugam K.T."/>
            <person name="Preston J.F."/>
        </authorList>
    </citation>
    <scope>NUCLEOTIDE SEQUENCE [LARGE SCALE GENOMIC DNA]</scope>
    <source>
        <strain>JDR-2</strain>
    </source>
</reference>